<name>Y3101_SALTO</name>
<evidence type="ECO:0000255" key="1">
    <source>
        <dbReference type="HAMAP-Rule" id="MF_00636"/>
    </source>
</evidence>
<comment type="function">
    <text evidence="1">Displays ATPase and GTPase activities.</text>
</comment>
<comment type="similarity">
    <text evidence="1">Belongs to the RapZ-like family.</text>
</comment>
<proteinExistence type="inferred from homology"/>
<reference key="1">
    <citation type="journal article" date="2007" name="Proc. Natl. Acad. Sci. U.S.A.">
        <title>Genome sequencing reveals complex secondary metabolome in the marine actinomycete Salinispora tropica.</title>
        <authorList>
            <person name="Udwary D.W."/>
            <person name="Zeigler L."/>
            <person name="Asolkar R.N."/>
            <person name="Singan V."/>
            <person name="Lapidus A."/>
            <person name="Fenical W."/>
            <person name="Jensen P.R."/>
            <person name="Moore B.S."/>
        </authorList>
    </citation>
    <scope>NUCLEOTIDE SEQUENCE [LARGE SCALE GENOMIC DNA]</scope>
    <source>
        <strain>ATCC BAA-916 / DSM 44818 / JCM 13857 / NBRC 105044 / CNB-440</strain>
    </source>
</reference>
<dbReference type="EMBL" id="CP000667">
    <property type="protein sequence ID" value="ABP55538.1"/>
    <property type="molecule type" value="Genomic_DNA"/>
</dbReference>
<dbReference type="SMR" id="A4XDR7"/>
<dbReference type="STRING" id="369723.Strop_3101"/>
<dbReference type="KEGG" id="stp:Strop_3101"/>
<dbReference type="PATRIC" id="fig|369723.5.peg.3191"/>
<dbReference type="eggNOG" id="COG1660">
    <property type="taxonomic scope" value="Bacteria"/>
</dbReference>
<dbReference type="HOGENOM" id="CLU_059558_0_0_11"/>
<dbReference type="Proteomes" id="UP000000235">
    <property type="component" value="Chromosome"/>
</dbReference>
<dbReference type="GO" id="GO:0005524">
    <property type="term" value="F:ATP binding"/>
    <property type="evidence" value="ECO:0007669"/>
    <property type="project" value="UniProtKB-UniRule"/>
</dbReference>
<dbReference type="GO" id="GO:0005525">
    <property type="term" value="F:GTP binding"/>
    <property type="evidence" value="ECO:0007669"/>
    <property type="project" value="UniProtKB-UniRule"/>
</dbReference>
<dbReference type="Gene3D" id="3.40.50.300">
    <property type="entry name" value="P-loop containing nucleotide triphosphate hydrolases"/>
    <property type="match status" value="1"/>
</dbReference>
<dbReference type="HAMAP" id="MF_00636">
    <property type="entry name" value="RapZ_like"/>
    <property type="match status" value="1"/>
</dbReference>
<dbReference type="InterPro" id="IPR027417">
    <property type="entry name" value="P-loop_NTPase"/>
</dbReference>
<dbReference type="InterPro" id="IPR005337">
    <property type="entry name" value="RapZ-like"/>
</dbReference>
<dbReference type="InterPro" id="IPR053930">
    <property type="entry name" value="RapZ-like_N"/>
</dbReference>
<dbReference type="InterPro" id="IPR053931">
    <property type="entry name" value="RapZ_C"/>
</dbReference>
<dbReference type="NCBIfam" id="NF003828">
    <property type="entry name" value="PRK05416.1"/>
    <property type="match status" value="1"/>
</dbReference>
<dbReference type="PANTHER" id="PTHR30448">
    <property type="entry name" value="RNASE ADAPTER PROTEIN RAPZ"/>
    <property type="match status" value="1"/>
</dbReference>
<dbReference type="PANTHER" id="PTHR30448:SF0">
    <property type="entry name" value="RNASE ADAPTER PROTEIN RAPZ"/>
    <property type="match status" value="1"/>
</dbReference>
<dbReference type="Pfam" id="PF22740">
    <property type="entry name" value="PapZ_C"/>
    <property type="match status" value="1"/>
</dbReference>
<dbReference type="Pfam" id="PF03668">
    <property type="entry name" value="RapZ-like_N"/>
    <property type="match status" value="1"/>
</dbReference>
<dbReference type="PIRSF" id="PIRSF005052">
    <property type="entry name" value="P-loopkin"/>
    <property type="match status" value="1"/>
</dbReference>
<dbReference type="SUPFAM" id="SSF52540">
    <property type="entry name" value="P-loop containing nucleoside triphosphate hydrolases"/>
    <property type="match status" value="1"/>
</dbReference>
<organism>
    <name type="scientific">Salinispora tropica (strain ATCC BAA-916 / DSM 44818 / JCM 13857 / NBRC 105044 / CNB-440)</name>
    <dbReference type="NCBI Taxonomy" id="369723"/>
    <lineage>
        <taxon>Bacteria</taxon>
        <taxon>Bacillati</taxon>
        <taxon>Actinomycetota</taxon>
        <taxon>Actinomycetes</taxon>
        <taxon>Micromonosporales</taxon>
        <taxon>Micromonosporaceae</taxon>
        <taxon>Salinispora</taxon>
    </lineage>
</organism>
<sequence length="302" mass="32705">MIEGQTSVPGEPDPSGTDTTLVVVTGVSGGGRSTVARALENVGYYVVDNLPQALMLDMAELAMKAGGAARRTAMVLDVRSRAFSTDLVGAIRELKERGFGPRVVFVDADDEVLIRRFESVRRSHPLQGEGRLADGIAVERGLLEGARDQADVFVDTSHLNVNQLRRRIEELFGAEDARRLRVTVVSFGFKYGVPPDADFVCDARFLPNPYWVPELREHTGQVEAVSSYVLGQAGAEDFVATYADLLNATTAGFEREGKRYVTAAVGCTGGKHRSVAIAEELAARLRQTGLAATAQHRDLGRE</sequence>
<keyword id="KW-0067">ATP-binding</keyword>
<keyword id="KW-0342">GTP-binding</keyword>
<keyword id="KW-0547">Nucleotide-binding</keyword>
<keyword id="KW-1185">Reference proteome</keyword>
<accession>A4XDR7</accession>
<feature type="chain" id="PRO_0000383286" description="Nucleotide-binding protein Strop_3101">
    <location>
        <begin position="1"/>
        <end position="302"/>
    </location>
</feature>
<feature type="binding site" evidence="1">
    <location>
        <begin position="26"/>
        <end position="33"/>
    </location>
    <ligand>
        <name>ATP</name>
        <dbReference type="ChEBI" id="CHEBI:30616"/>
    </ligand>
</feature>
<feature type="binding site" evidence="1">
    <location>
        <begin position="77"/>
        <end position="80"/>
    </location>
    <ligand>
        <name>GTP</name>
        <dbReference type="ChEBI" id="CHEBI:37565"/>
    </ligand>
</feature>
<gene>
    <name type="ordered locus">Strop_3101</name>
</gene>
<protein>
    <recommendedName>
        <fullName evidence="1">Nucleotide-binding protein Strop_3101</fullName>
    </recommendedName>
</protein>